<protein>
    <recommendedName>
        <fullName evidence="1">Ribulose bisphosphate carboxylase small subunit, chloroplastic 1</fullName>
        <shortName evidence="1">RuBisCO small subunit 1</shortName>
    </recommendedName>
    <alternativeName>
        <fullName>Ribulose bisphosphate carboxylase small chain C, chloroplastic</fullName>
        <shortName>RuBisCO small subunit C</shortName>
    </alternativeName>
</protein>
<accession>P10647</accession>
<proteinExistence type="evidence at transcript level"/>
<gene>
    <name evidence="1" type="primary">RBCS1</name>
    <name type="synonym">RBCS-C</name>
</gene>
<organism>
    <name type="scientific">Solanum tuberosum</name>
    <name type="common">Potato</name>
    <dbReference type="NCBI Taxonomy" id="4113"/>
    <lineage>
        <taxon>Eukaryota</taxon>
        <taxon>Viridiplantae</taxon>
        <taxon>Streptophyta</taxon>
        <taxon>Embryophyta</taxon>
        <taxon>Tracheophyta</taxon>
        <taxon>Spermatophyta</taxon>
        <taxon>Magnoliopsida</taxon>
        <taxon>eudicotyledons</taxon>
        <taxon>Gunneridae</taxon>
        <taxon>Pentapetalae</taxon>
        <taxon>asterids</taxon>
        <taxon>lamiids</taxon>
        <taxon>Solanales</taxon>
        <taxon>Solanaceae</taxon>
        <taxon>Solanoideae</taxon>
        <taxon>Solaneae</taxon>
        <taxon>Solanum</taxon>
    </lineage>
</organism>
<dbReference type="EMBL" id="J03613">
    <property type="protein sequence ID" value="AAA33838.1"/>
    <property type="molecule type" value="mRNA"/>
</dbReference>
<dbReference type="PIR" id="A31083">
    <property type="entry name" value="RKPOSC"/>
</dbReference>
<dbReference type="RefSeq" id="NP_001275244.1">
    <property type="nucleotide sequence ID" value="NM_001288315.1"/>
</dbReference>
<dbReference type="SMR" id="P10647"/>
<dbReference type="FunCoup" id="P10647">
    <property type="interactions" value="1469"/>
</dbReference>
<dbReference type="STRING" id="4113.P10647"/>
<dbReference type="PaxDb" id="4113-PGSC0003DMT400062138"/>
<dbReference type="GeneID" id="102605737"/>
<dbReference type="KEGG" id="sot:102605737"/>
<dbReference type="eggNOG" id="ENOG502QT0M">
    <property type="taxonomic scope" value="Eukaryota"/>
</dbReference>
<dbReference type="InParanoid" id="P10647"/>
<dbReference type="OrthoDB" id="2013936at2759"/>
<dbReference type="Proteomes" id="UP000011115">
    <property type="component" value="Unassembled WGS sequence"/>
</dbReference>
<dbReference type="ExpressionAtlas" id="P10647">
    <property type="expression patterns" value="baseline and differential"/>
</dbReference>
<dbReference type="GO" id="GO:0009507">
    <property type="term" value="C:chloroplast"/>
    <property type="evidence" value="ECO:0007669"/>
    <property type="project" value="UniProtKB-SubCell"/>
</dbReference>
<dbReference type="GO" id="GO:0016984">
    <property type="term" value="F:ribulose-bisphosphate carboxylase activity"/>
    <property type="evidence" value="ECO:0007669"/>
    <property type="project" value="UniProtKB-UniRule"/>
</dbReference>
<dbReference type="GO" id="GO:0009853">
    <property type="term" value="P:photorespiration"/>
    <property type="evidence" value="ECO:0007669"/>
    <property type="project" value="UniProtKB-KW"/>
</dbReference>
<dbReference type="GO" id="GO:0019253">
    <property type="term" value="P:reductive pentose-phosphate cycle"/>
    <property type="evidence" value="ECO:0007669"/>
    <property type="project" value="UniProtKB-UniRule"/>
</dbReference>
<dbReference type="CDD" id="cd03527">
    <property type="entry name" value="RuBisCO_small"/>
    <property type="match status" value="1"/>
</dbReference>
<dbReference type="FunFam" id="3.30.190.10:FF:000001">
    <property type="entry name" value="Ribulose bisphosphate carboxylase small chain, chloroplastic"/>
    <property type="match status" value="1"/>
</dbReference>
<dbReference type="Gene3D" id="3.30.190.10">
    <property type="entry name" value="Ribulose bisphosphate carboxylase, small subunit"/>
    <property type="match status" value="1"/>
</dbReference>
<dbReference type="HAMAP" id="MF_00859">
    <property type="entry name" value="RuBisCO_S_bact"/>
    <property type="match status" value="1"/>
</dbReference>
<dbReference type="InterPro" id="IPR024681">
    <property type="entry name" value="RuBisCO_ssu"/>
</dbReference>
<dbReference type="InterPro" id="IPR000894">
    <property type="entry name" value="RuBisCO_ssu_dom"/>
</dbReference>
<dbReference type="InterPro" id="IPR024680">
    <property type="entry name" value="RuBisCO_ssu_N"/>
</dbReference>
<dbReference type="InterPro" id="IPR036385">
    <property type="entry name" value="RuBisCO_ssu_sf"/>
</dbReference>
<dbReference type="PANTHER" id="PTHR31262">
    <property type="entry name" value="RIBULOSE BISPHOSPHATE CARBOXYLASE SMALL CHAIN 1, CHLOROPLASTIC"/>
    <property type="match status" value="1"/>
</dbReference>
<dbReference type="PANTHER" id="PTHR31262:SF14">
    <property type="entry name" value="RIBULOSE BISPHOSPHATE CARBOXYLASE SMALL SUBUNIT, CHLOROPLASTIC 1"/>
    <property type="match status" value="1"/>
</dbReference>
<dbReference type="Pfam" id="PF12338">
    <property type="entry name" value="RbcS"/>
    <property type="match status" value="1"/>
</dbReference>
<dbReference type="Pfam" id="PF00101">
    <property type="entry name" value="RuBisCO_small"/>
    <property type="match status" value="1"/>
</dbReference>
<dbReference type="PRINTS" id="PR00152">
    <property type="entry name" value="RUBISCOSMALL"/>
</dbReference>
<dbReference type="SMART" id="SM00961">
    <property type="entry name" value="RuBisCO_small"/>
    <property type="match status" value="1"/>
</dbReference>
<dbReference type="SUPFAM" id="SSF55239">
    <property type="entry name" value="RuBisCO, small subunit"/>
    <property type="match status" value="1"/>
</dbReference>
<sequence length="181" mass="20368">MASSIVSSAAVATRSNVAQASMVAPFTGLKSAASFPVTKKNNNVDITSLASNGGRVRCMQVWPPINMKKYETLSYLPDLSDEQLLKEVEYLLKNGWVPCLEFETEHGFVYREHNSSPGYYDGRYWTMWKLPMFGCTDGTQVLAEVQEAKNAYPQAWIRIIGFDNVRQVQCISFIAYKPEGY</sequence>
<reference key="1">
    <citation type="journal article" date="1988" name="Proc. Natl. Acad. Sci. U.S.A.">
        <title>rbcS genes in Solanum tuberosum: conservation of transit peptide and exon shuffling during evolution.</title>
        <authorList>
            <person name="Wolter F.P."/>
            <person name="Fritz C.C."/>
            <person name="Willmitzer L."/>
            <person name="Schell J."/>
            <person name="Schreier P.H."/>
        </authorList>
    </citation>
    <scope>NUCLEOTIDE SEQUENCE [MRNA]</scope>
    <source>
        <strain>cv. HH1201/7</strain>
    </source>
</reference>
<feature type="transit peptide" description="Chloroplast" evidence="1">
    <location>
        <begin position="1"/>
        <end position="57"/>
    </location>
</feature>
<feature type="chain" id="PRO_0000031550" description="Ribulose bisphosphate carboxylase small subunit, chloroplastic 1" evidence="1">
    <location>
        <begin position="58"/>
        <end position="181"/>
    </location>
</feature>
<keyword id="KW-0113">Calvin cycle</keyword>
<keyword id="KW-0120">Carbon dioxide fixation</keyword>
<keyword id="KW-0150">Chloroplast</keyword>
<keyword id="KW-0601">Photorespiration</keyword>
<keyword id="KW-0602">Photosynthesis</keyword>
<keyword id="KW-0934">Plastid</keyword>
<keyword id="KW-1185">Reference proteome</keyword>
<keyword id="KW-0809">Transit peptide</keyword>
<evidence type="ECO:0000255" key="1">
    <source>
        <dbReference type="HAMAP-Rule" id="MF_00860"/>
    </source>
</evidence>
<comment type="function">
    <text evidence="1">RuBisCO catalyzes two reactions: the carboxylation of D-ribulose 1,5-bisphosphate, the primary event in carbon dioxide fixation, as well as the oxidative fragmentation of the pentose substrate. Both reactions occur simultaneously and in competition at the same active site. Although the small subunit is not catalytic it is essential for maximal activity.</text>
</comment>
<comment type="subunit">
    <text evidence="1">Heterohexadecamer of 8 large and 8 small subunits.</text>
</comment>
<comment type="subcellular location">
    <subcellularLocation>
        <location evidence="1">Plastid</location>
        <location evidence="1">Chloroplast</location>
    </subcellularLocation>
</comment>
<comment type="miscellaneous">
    <text evidence="1">The basic functional RuBisCO is composed of a large chain homodimer in a 'head-to-tail' conformation. In form I RuBisCO this homodimer is arranged in a barrel-like tetramer with the small subunits forming a tetrameric 'cap' on each end of the 'barrel'.</text>
</comment>
<comment type="similarity">
    <text evidence="1">Belongs to the RuBisCO small chain family.</text>
</comment>
<name>RBS1_SOLTU</name>